<gene>
    <name evidence="1" type="primary">ihfB</name>
    <name evidence="1" type="synonym">himD</name>
    <name type="ordered locus">RD1_3910</name>
</gene>
<protein>
    <recommendedName>
        <fullName evidence="1">Integration host factor subunit beta</fullName>
        <shortName evidence="1">IHF-beta</shortName>
    </recommendedName>
</protein>
<keyword id="KW-0233">DNA recombination</keyword>
<keyword id="KW-0238">DNA-binding</keyword>
<keyword id="KW-1185">Reference proteome</keyword>
<keyword id="KW-0804">Transcription</keyword>
<keyword id="KW-0805">Transcription regulation</keyword>
<keyword id="KW-0810">Translation regulation</keyword>
<accession>Q161H6</accession>
<name>IHFB_ROSDO</name>
<dbReference type="EMBL" id="CP000362">
    <property type="protein sequence ID" value="ABG33367.1"/>
    <property type="molecule type" value="Genomic_DNA"/>
</dbReference>
<dbReference type="RefSeq" id="WP_011569978.1">
    <property type="nucleotide sequence ID" value="NC_008209.1"/>
</dbReference>
<dbReference type="SMR" id="Q161H6"/>
<dbReference type="STRING" id="375451.RD1_3910"/>
<dbReference type="KEGG" id="rde:RD1_3910"/>
<dbReference type="eggNOG" id="COG0776">
    <property type="taxonomic scope" value="Bacteria"/>
</dbReference>
<dbReference type="HOGENOM" id="CLU_105066_2_0_5"/>
<dbReference type="OrthoDB" id="9804203at2"/>
<dbReference type="Proteomes" id="UP000007029">
    <property type="component" value="Chromosome"/>
</dbReference>
<dbReference type="GO" id="GO:0005694">
    <property type="term" value="C:chromosome"/>
    <property type="evidence" value="ECO:0007669"/>
    <property type="project" value="InterPro"/>
</dbReference>
<dbReference type="GO" id="GO:0005829">
    <property type="term" value="C:cytosol"/>
    <property type="evidence" value="ECO:0007669"/>
    <property type="project" value="TreeGrafter"/>
</dbReference>
<dbReference type="GO" id="GO:0003677">
    <property type="term" value="F:DNA binding"/>
    <property type="evidence" value="ECO:0007669"/>
    <property type="project" value="UniProtKB-UniRule"/>
</dbReference>
<dbReference type="GO" id="GO:0030527">
    <property type="term" value="F:structural constituent of chromatin"/>
    <property type="evidence" value="ECO:0007669"/>
    <property type="project" value="InterPro"/>
</dbReference>
<dbReference type="GO" id="GO:0006310">
    <property type="term" value="P:DNA recombination"/>
    <property type="evidence" value="ECO:0007669"/>
    <property type="project" value="UniProtKB-UniRule"/>
</dbReference>
<dbReference type="GO" id="GO:0006355">
    <property type="term" value="P:regulation of DNA-templated transcription"/>
    <property type="evidence" value="ECO:0007669"/>
    <property type="project" value="UniProtKB-UniRule"/>
</dbReference>
<dbReference type="GO" id="GO:0006417">
    <property type="term" value="P:regulation of translation"/>
    <property type="evidence" value="ECO:0007669"/>
    <property type="project" value="UniProtKB-UniRule"/>
</dbReference>
<dbReference type="CDD" id="cd13836">
    <property type="entry name" value="IHF_B"/>
    <property type="match status" value="1"/>
</dbReference>
<dbReference type="Gene3D" id="4.10.520.10">
    <property type="entry name" value="IHF-like DNA-binding proteins"/>
    <property type="match status" value="1"/>
</dbReference>
<dbReference type="HAMAP" id="MF_00381">
    <property type="entry name" value="IHF_beta"/>
    <property type="match status" value="1"/>
</dbReference>
<dbReference type="InterPro" id="IPR000119">
    <property type="entry name" value="Hist_DNA-bd"/>
</dbReference>
<dbReference type="InterPro" id="IPR020816">
    <property type="entry name" value="Histone-like_DNA-bd_CS"/>
</dbReference>
<dbReference type="InterPro" id="IPR010992">
    <property type="entry name" value="IHF-like_DNA-bd_dom_sf"/>
</dbReference>
<dbReference type="InterPro" id="IPR005685">
    <property type="entry name" value="IHF_beta"/>
</dbReference>
<dbReference type="NCBIfam" id="TIGR00988">
    <property type="entry name" value="hip"/>
    <property type="match status" value="1"/>
</dbReference>
<dbReference type="NCBIfam" id="NF001222">
    <property type="entry name" value="PRK00199.1"/>
    <property type="match status" value="1"/>
</dbReference>
<dbReference type="PANTHER" id="PTHR33175">
    <property type="entry name" value="DNA-BINDING PROTEIN HU"/>
    <property type="match status" value="1"/>
</dbReference>
<dbReference type="PANTHER" id="PTHR33175:SF5">
    <property type="entry name" value="INTEGRATION HOST FACTOR SUBUNIT BETA"/>
    <property type="match status" value="1"/>
</dbReference>
<dbReference type="Pfam" id="PF00216">
    <property type="entry name" value="Bac_DNA_binding"/>
    <property type="match status" value="1"/>
</dbReference>
<dbReference type="PRINTS" id="PR01727">
    <property type="entry name" value="DNABINDINGHU"/>
</dbReference>
<dbReference type="SMART" id="SM00411">
    <property type="entry name" value="BHL"/>
    <property type="match status" value="1"/>
</dbReference>
<dbReference type="SUPFAM" id="SSF47729">
    <property type="entry name" value="IHF-like DNA-binding proteins"/>
    <property type="match status" value="1"/>
</dbReference>
<dbReference type="PROSITE" id="PS00045">
    <property type="entry name" value="HISTONE_LIKE"/>
    <property type="match status" value="1"/>
</dbReference>
<evidence type="ECO:0000255" key="1">
    <source>
        <dbReference type="HAMAP-Rule" id="MF_00381"/>
    </source>
</evidence>
<reference key="1">
    <citation type="journal article" date="2007" name="J. Bacteriol.">
        <title>The complete genome sequence of Roseobacter denitrificans reveals a mixotrophic rather than photosynthetic metabolism.</title>
        <authorList>
            <person name="Swingley W.D."/>
            <person name="Sadekar S."/>
            <person name="Mastrian S.D."/>
            <person name="Matthies H.J."/>
            <person name="Hao J."/>
            <person name="Ramos H."/>
            <person name="Acharya C.R."/>
            <person name="Conrad A.L."/>
            <person name="Taylor H.L."/>
            <person name="Dejesa L.C."/>
            <person name="Shah M.K."/>
            <person name="O'Huallachain M.E."/>
            <person name="Lince M.T."/>
            <person name="Blankenship R.E."/>
            <person name="Beatty J.T."/>
            <person name="Touchman J.W."/>
        </authorList>
    </citation>
    <scope>NUCLEOTIDE SEQUENCE [LARGE SCALE GENOMIC DNA]</scope>
    <source>
        <strain>ATCC 33942 / OCh 114</strain>
    </source>
</reference>
<sequence>MIRSELIQKIADENPHLYQRDVERIVNTIFEEVTGAMARGDRVELRGFGAFSVKKRDARIGRNPRTGETVHVEEKHVPFFKTGKLLRDRLNGKS</sequence>
<organism>
    <name type="scientific">Roseobacter denitrificans (strain ATCC 33942 / OCh 114)</name>
    <name type="common">Erythrobacter sp. (strain OCh 114)</name>
    <name type="synonym">Roseobacter denitrificans</name>
    <dbReference type="NCBI Taxonomy" id="375451"/>
    <lineage>
        <taxon>Bacteria</taxon>
        <taxon>Pseudomonadati</taxon>
        <taxon>Pseudomonadota</taxon>
        <taxon>Alphaproteobacteria</taxon>
        <taxon>Rhodobacterales</taxon>
        <taxon>Roseobacteraceae</taxon>
        <taxon>Roseobacter</taxon>
    </lineage>
</organism>
<feature type="chain" id="PRO_1000060648" description="Integration host factor subunit beta">
    <location>
        <begin position="1"/>
        <end position="94"/>
    </location>
</feature>
<comment type="function">
    <text evidence="1">This protein is one of the two subunits of integration host factor, a specific DNA-binding protein that functions in genetic recombination as well as in transcriptional and translational control.</text>
</comment>
<comment type="subunit">
    <text evidence="1">Heterodimer of an alpha and a beta chain.</text>
</comment>
<comment type="similarity">
    <text evidence="1">Belongs to the bacterial histone-like protein family.</text>
</comment>
<proteinExistence type="inferred from homology"/>